<sequence>MPDTLKVADVTFGGNHPVALIAGPCVMENEAHTLAIARQLLEVKNELGVGVVFKASFDKANRTSVSAYRGPGLESGLRILDKVRQQTGLPIVSDIHDVSQVEAAAEVLDILQIPAFLCRQTDLLLAAGRSGKVVNIKKGQFLAPWDMANAVAKVASTGNDRILLTERGTSFGYNNLVVDMRSLAVMRELGCPVVFDATHAVQLPGGAGTSSGGQRQFVAALSRAAVAVGVDGLFWEVHPDPDRALCDGANSLPLDQVKKTLKEMMAIDAIVKGNTES</sequence>
<dbReference type="EC" id="2.5.1.55" evidence="1"/>
<dbReference type="EMBL" id="CP000142">
    <property type="protein sequence ID" value="ABA89185.1"/>
    <property type="molecule type" value="Genomic_DNA"/>
</dbReference>
<dbReference type="RefSeq" id="WP_011341690.1">
    <property type="nucleotide sequence ID" value="NC_007498.2"/>
</dbReference>
<dbReference type="SMR" id="Q3A372"/>
<dbReference type="STRING" id="338963.Pcar_1944"/>
<dbReference type="KEGG" id="pca:Pcar_1944"/>
<dbReference type="eggNOG" id="COG2877">
    <property type="taxonomic scope" value="Bacteria"/>
</dbReference>
<dbReference type="HOGENOM" id="CLU_036666_0_0_7"/>
<dbReference type="OrthoDB" id="9802281at2"/>
<dbReference type="UniPathway" id="UPA00030"/>
<dbReference type="UniPathway" id="UPA00357">
    <property type="reaction ID" value="UER00474"/>
</dbReference>
<dbReference type="Proteomes" id="UP000002534">
    <property type="component" value="Chromosome"/>
</dbReference>
<dbReference type="GO" id="GO:0005737">
    <property type="term" value="C:cytoplasm"/>
    <property type="evidence" value="ECO:0007669"/>
    <property type="project" value="UniProtKB-SubCell"/>
</dbReference>
<dbReference type="GO" id="GO:0008676">
    <property type="term" value="F:3-deoxy-8-phosphooctulonate synthase activity"/>
    <property type="evidence" value="ECO:0007669"/>
    <property type="project" value="UniProtKB-UniRule"/>
</dbReference>
<dbReference type="GO" id="GO:0019294">
    <property type="term" value="P:keto-3-deoxy-D-manno-octulosonic acid biosynthetic process"/>
    <property type="evidence" value="ECO:0007669"/>
    <property type="project" value="UniProtKB-UniRule"/>
</dbReference>
<dbReference type="Gene3D" id="3.20.20.70">
    <property type="entry name" value="Aldolase class I"/>
    <property type="match status" value="1"/>
</dbReference>
<dbReference type="HAMAP" id="MF_00056">
    <property type="entry name" value="KDO8P_synth"/>
    <property type="match status" value="1"/>
</dbReference>
<dbReference type="InterPro" id="IPR013785">
    <property type="entry name" value="Aldolase_TIM"/>
</dbReference>
<dbReference type="InterPro" id="IPR006218">
    <property type="entry name" value="DAHP1/KDSA"/>
</dbReference>
<dbReference type="InterPro" id="IPR006269">
    <property type="entry name" value="KDO8P_synthase"/>
</dbReference>
<dbReference type="NCBIfam" id="TIGR01362">
    <property type="entry name" value="KDO8P_synth"/>
    <property type="match status" value="1"/>
</dbReference>
<dbReference type="NCBIfam" id="NF003543">
    <property type="entry name" value="PRK05198.1"/>
    <property type="match status" value="1"/>
</dbReference>
<dbReference type="PANTHER" id="PTHR21057">
    <property type="entry name" value="PHOSPHO-2-DEHYDRO-3-DEOXYHEPTONATE ALDOLASE"/>
    <property type="match status" value="1"/>
</dbReference>
<dbReference type="Pfam" id="PF00793">
    <property type="entry name" value="DAHP_synth_1"/>
    <property type="match status" value="1"/>
</dbReference>
<dbReference type="SUPFAM" id="SSF51569">
    <property type="entry name" value="Aldolase"/>
    <property type="match status" value="1"/>
</dbReference>
<organism>
    <name type="scientific">Syntrophotalea carbinolica (strain DSM 2380 / NBRC 103641 / GraBd1)</name>
    <name type="common">Pelobacter carbinolicus</name>
    <dbReference type="NCBI Taxonomy" id="338963"/>
    <lineage>
        <taxon>Bacteria</taxon>
        <taxon>Pseudomonadati</taxon>
        <taxon>Thermodesulfobacteriota</taxon>
        <taxon>Desulfuromonadia</taxon>
        <taxon>Desulfuromonadales</taxon>
        <taxon>Syntrophotaleaceae</taxon>
        <taxon>Syntrophotalea</taxon>
    </lineage>
</organism>
<accession>Q3A372</accession>
<keyword id="KW-0963">Cytoplasm</keyword>
<keyword id="KW-0448">Lipopolysaccharide biosynthesis</keyword>
<keyword id="KW-1185">Reference proteome</keyword>
<keyword id="KW-0808">Transferase</keyword>
<proteinExistence type="inferred from homology"/>
<evidence type="ECO:0000255" key="1">
    <source>
        <dbReference type="HAMAP-Rule" id="MF_00056"/>
    </source>
</evidence>
<feature type="chain" id="PRO_0000304465" description="2-dehydro-3-deoxyphosphooctonate aldolase">
    <location>
        <begin position="1"/>
        <end position="277"/>
    </location>
</feature>
<comment type="catalytic activity">
    <reaction evidence="1">
        <text>D-arabinose 5-phosphate + phosphoenolpyruvate + H2O = 3-deoxy-alpha-D-manno-2-octulosonate-8-phosphate + phosphate</text>
        <dbReference type="Rhea" id="RHEA:14053"/>
        <dbReference type="ChEBI" id="CHEBI:15377"/>
        <dbReference type="ChEBI" id="CHEBI:43474"/>
        <dbReference type="ChEBI" id="CHEBI:57693"/>
        <dbReference type="ChEBI" id="CHEBI:58702"/>
        <dbReference type="ChEBI" id="CHEBI:85985"/>
        <dbReference type="EC" id="2.5.1.55"/>
    </reaction>
</comment>
<comment type="pathway">
    <text evidence="1">Carbohydrate biosynthesis; 3-deoxy-D-manno-octulosonate biosynthesis; 3-deoxy-D-manno-octulosonate from D-ribulose 5-phosphate: step 2/3.</text>
</comment>
<comment type="pathway">
    <text evidence="1">Bacterial outer membrane biogenesis; lipopolysaccharide biosynthesis.</text>
</comment>
<comment type="subcellular location">
    <subcellularLocation>
        <location evidence="1">Cytoplasm</location>
    </subcellularLocation>
</comment>
<comment type="similarity">
    <text evidence="1">Belongs to the KdsA family.</text>
</comment>
<protein>
    <recommendedName>
        <fullName evidence="1">2-dehydro-3-deoxyphosphooctonate aldolase</fullName>
        <ecNumber evidence="1">2.5.1.55</ecNumber>
    </recommendedName>
    <alternativeName>
        <fullName evidence="1">3-deoxy-D-manno-octulosonic acid 8-phosphate synthase</fullName>
    </alternativeName>
    <alternativeName>
        <fullName evidence="1">KDO-8-phosphate synthase</fullName>
        <shortName evidence="1">KDO 8-P synthase</shortName>
        <shortName evidence="1">KDOPS</shortName>
    </alternativeName>
    <alternativeName>
        <fullName evidence="1">Phospho-2-dehydro-3-deoxyoctonate aldolase</fullName>
    </alternativeName>
</protein>
<name>KDSA_SYNC1</name>
<gene>
    <name evidence="1" type="primary">kdsA</name>
    <name type="ordered locus">Pcar_1944</name>
</gene>
<reference key="1">
    <citation type="submission" date="2005-10" db="EMBL/GenBank/DDBJ databases">
        <title>Complete sequence of Pelobacter carbinolicus DSM 2380.</title>
        <authorList>
            <person name="Copeland A."/>
            <person name="Lucas S."/>
            <person name="Lapidus A."/>
            <person name="Barry K."/>
            <person name="Detter J.C."/>
            <person name="Glavina T."/>
            <person name="Hammon N."/>
            <person name="Israni S."/>
            <person name="Pitluck S."/>
            <person name="Chertkov O."/>
            <person name="Schmutz J."/>
            <person name="Larimer F."/>
            <person name="Land M."/>
            <person name="Kyrpides N."/>
            <person name="Ivanova N."/>
            <person name="Richardson P."/>
        </authorList>
    </citation>
    <scope>NUCLEOTIDE SEQUENCE [LARGE SCALE GENOMIC DNA]</scope>
    <source>
        <strain>DSM 2380 / NBRC 103641 / GraBd1</strain>
    </source>
</reference>